<name>UVRA_LEPIN</name>
<evidence type="ECO:0000255" key="1">
    <source>
        <dbReference type="HAMAP-Rule" id="MF_00205"/>
    </source>
</evidence>
<proteinExistence type="inferred from homology"/>
<accession>Q8F435</accession>
<keyword id="KW-0067">ATP-binding</keyword>
<keyword id="KW-0963">Cytoplasm</keyword>
<keyword id="KW-0227">DNA damage</keyword>
<keyword id="KW-0228">DNA excision</keyword>
<keyword id="KW-0234">DNA repair</keyword>
<keyword id="KW-0238">DNA-binding</keyword>
<keyword id="KW-0267">Excision nuclease</keyword>
<keyword id="KW-0479">Metal-binding</keyword>
<keyword id="KW-0547">Nucleotide-binding</keyword>
<keyword id="KW-1185">Reference proteome</keyword>
<keyword id="KW-0677">Repeat</keyword>
<keyword id="KW-0742">SOS response</keyword>
<keyword id="KW-0862">Zinc</keyword>
<keyword id="KW-0863">Zinc-finger</keyword>
<gene>
    <name evidence="1" type="primary">uvrA</name>
    <name type="ordered locus">LA_2212</name>
</gene>
<organism>
    <name type="scientific">Leptospira interrogans serogroup Icterohaemorrhagiae serovar Lai (strain 56601)</name>
    <dbReference type="NCBI Taxonomy" id="189518"/>
    <lineage>
        <taxon>Bacteria</taxon>
        <taxon>Pseudomonadati</taxon>
        <taxon>Spirochaetota</taxon>
        <taxon>Spirochaetia</taxon>
        <taxon>Leptospirales</taxon>
        <taxon>Leptospiraceae</taxon>
        <taxon>Leptospira</taxon>
    </lineage>
</organism>
<dbReference type="EMBL" id="AE010300">
    <property type="protein sequence ID" value="AAN49411.1"/>
    <property type="molecule type" value="Genomic_DNA"/>
</dbReference>
<dbReference type="RefSeq" id="NP_712393.1">
    <property type="nucleotide sequence ID" value="NC_004342.2"/>
</dbReference>
<dbReference type="RefSeq" id="WP_001156251.1">
    <property type="nucleotide sequence ID" value="NC_004342.2"/>
</dbReference>
<dbReference type="SMR" id="Q8F435"/>
<dbReference type="FunCoup" id="Q8F435">
    <property type="interactions" value="260"/>
</dbReference>
<dbReference type="STRING" id="189518.LA_2212"/>
<dbReference type="PaxDb" id="189518-LA_2212"/>
<dbReference type="EnsemblBacteria" id="AAN49411">
    <property type="protein sequence ID" value="AAN49411"/>
    <property type="gene ID" value="LA_2212"/>
</dbReference>
<dbReference type="GeneID" id="61141613"/>
<dbReference type="KEGG" id="lil:LA_2212"/>
<dbReference type="PATRIC" id="fig|189518.3.peg.2204"/>
<dbReference type="HOGENOM" id="CLU_001370_0_2_12"/>
<dbReference type="InParanoid" id="Q8F435"/>
<dbReference type="OrthoDB" id="9809851at2"/>
<dbReference type="Proteomes" id="UP000001408">
    <property type="component" value="Chromosome I"/>
</dbReference>
<dbReference type="GO" id="GO:0005737">
    <property type="term" value="C:cytoplasm"/>
    <property type="evidence" value="ECO:0007669"/>
    <property type="project" value="UniProtKB-SubCell"/>
</dbReference>
<dbReference type="GO" id="GO:0009380">
    <property type="term" value="C:excinuclease repair complex"/>
    <property type="evidence" value="ECO:0007669"/>
    <property type="project" value="InterPro"/>
</dbReference>
<dbReference type="GO" id="GO:0005524">
    <property type="term" value="F:ATP binding"/>
    <property type="evidence" value="ECO:0007669"/>
    <property type="project" value="UniProtKB-UniRule"/>
</dbReference>
<dbReference type="GO" id="GO:0016887">
    <property type="term" value="F:ATP hydrolysis activity"/>
    <property type="evidence" value="ECO:0007669"/>
    <property type="project" value="InterPro"/>
</dbReference>
<dbReference type="GO" id="GO:0003677">
    <property type="term" value="F:DNA binding"/>
    <property type="evidence" value="ECO:0007669"/>
    <property type="project" value="UniProtKB-UniRule"/>
</dbReference>
<dbReference type="GO" id="GO:0009381">
    <property type="term" value="F:excinuclease ABC activity"/>
    <property type="evidence" value="ECO:0007669"/>
    <property type="project" value="UniProtKB-UniRule"/>
</dbReference>
<dbReference type="GO" id="GO:0008270">
    <property type="term" value="F:zinc ion binding"/>
    <property type="evidence" value="ECO:0007669"/>
    <property type="project" value="UniProtKB-UniRule"/>
</dbReference>
<dbReference type="GO" id="GO:0006289">
    <property type="term" value="P:nucleotide-excision repair"/>
    <property type="evidence" value="ECO:0007669"/>
    <property type="project" value="UniProtKB-UniRule"/>
</dbReference>
<dbReference type="GO" id="GO:0009432">
    <property type="term" value="P:SOS response"/>
    <property type="evidence" value="ECO:0007669"/>
    <property type="project" value="UniProtKB-UniRule"/>
</dbReference>
<dbReference type="CDD" id="cd03270">
    <property type="entry name" value="ABC_UvrA_I"/>
    <property type="match status" value="1"/>
</dbReference>
<dbReference type="CDD" id="cd03271">
    <property type="entry name" value="ABC_UvrA_II"/>
    <property type="match status" value="1"/>
</dbReference>
<dbReference type="FunFam" id="1.20.1580.10:FF:000002">
    <property type="entry name" value="UvrABC system protein A"/>
    <property type="match status" value="1"/>
</dbReference>
<dbReference type="Gene3D" id="1.10.8.280">
    <property type="entry name" value="ABC transporter ATPase domain-like"/>
    <property type="match status" value="1"/>
</dbReference>
<dbReference type="Gene3D" id="1.20.1580.10">
    <property type="entry name" value="ABC transporter ATPase like domain"/>
    <property type="match status" value="2"/>
</dbReference>
<dbReference type="Gene3D" id="3.30.1490.20">
    <property type="entry name" value="ATP-grasp fold, A domain"/>
    <property type="match status" value="1"/>
</dbReference>
<dbReference type="Gene3D" id="3.40.50.300">
    <property type="entry name" value="P-loop containing nucleotide triphosphate hydrolases"/>
    <property type="match status" value="2"/>
</dbReference>
<dbReference type="HAMAP" id="MF_00205">
    <property type="entry name" value="UvrA"/>
    <property type="match status" value="1"/>
</dbReference>
<dbReference type="InterPro" id="IPR003593">
    <property type="entry name" value="AAA+_ATPase"/>
</dbReference>
<dbReference type="InterPro" id="IPR003439">
    <property type="entry name" value="ABC_transporter-like_ATP-bd"/>
</dbReference>
<dbReference type="InterPro" id="IPR017871">
    <property type="entry name" value="ABC_transporter-like_CS"/>
</dbReference>
<dbReference type="InterPro" id="IPR013815">
    <property type="entry name" value="ATP_grasp_subdomain_1"/>
</dbReference>
<dbReference type="InterPro" id="IPR027417">
    <property type="entry name" value="P-loop_NTPase"/>
</dbReference>
<dbReference type="InterPro" id="IPR004602">
    <property type="entry name" value="UvrA"/>
</dbReference>
<dbReference type="InterPro" id="IPR041552">
    <property type="entry name" value="UvrA_DNA-bd"/>
</dbReference>
<dbReference type="InterPro" id="IPR041102">
    <property type="entry name" value="UvrA_inter"/>
</dbReference>
<dbReference type="NCBIfam" id="NF001503">
    <property type="entry name" value="PRK00349.1"/>
    <property type="match status" value="1"/>
</dbReference>
<dbReference type="NCBIfam" id="TIGR00630">
    <property type="entry name" value="uvra"/>
    <property type="match status" value="1"/>
</dbReference>
<dbReference type="PANTHER" id="PTHR43152">
    <property type="entry name" value="UVRABC SYSTEM PROTEIN A"/>
    <property type="match status" value="1"/>
</dbReference>
<dbReference type="PANTHER" id="PTHR43152:SF3">
    <property type="entry name" value="UVRABC SYSTEM PROTEIN A"/>
    <property type="match status" value="1"/>
</dbReference>
<dbReference type="Pfam" id="PF17755">
    <property type="entry name" value="UvrA_DNA-bind"/>
    <property type="match status" value="1"/>
</dbReference>
<dbReference type="Pfam" id="PF17760">
    <property type="entry name" value="UvrA_inter"/>
    <property type="match status" value="1"/>
</dbReference>
<dbReference type="SMART" id="SM00382">
    <property type="entry name" value="AAA"/>
    <property type="match status" value="1"/>
</dbReference>
<dbReference type="SUPFAM" id="SSF52540">
    <property type="entry name" value="P-loop containing nucleoside triphosphate hydrolases"/>
    <property type="match status" value="2"/>
</dbReference>
<dbReference type="PROSITE" id="PS00211">
    <property type="entry name" value="ABC_TRANSPORTER_1"/>
    <property type="match status" value="2"/>
</dbReference>
<dbReference type="PROSITE" id="PS50893">
    <property type="entry name" value="ABC_TRANSPORTER_2"/>
    <property type="match status" value="1"/>
</dbReference>
<protein>
    <recommendedName>
        <fullName evidence="1">UvrABC system protein A</fullName>
        <shortName evidence="1">UvrA protein</shortName>
    </recommendedName>
    <alternativeName>
        <fullName evidence="1">Excinuclease ABC subunit A</fullName>
    </alternativeName>
</protein>
<feature type="chain" id="PRO_0000093059" description="UvrABC system protein A">
    <location>
        <begin position="1"/>
        <end position="948"/>
    </location>
</feature>
<feature type="domain" description="ABC transporter 1" evidence="1">
    <location>
        <begin position="307"/>
        <end position="586"/>
    </location>
</feature>
<feature type="domain" description="ABC transporter 2" evidence="1">
    <location>
        <begin position="606"/>
        <end position="934"/>
    </location>
</feature>
<feature type="zinc finger region" description="C4-type" evidence="1">
    <location>
        <begin position="249"/>
        <end position="277"/>
    </location>
</feature>
<feature type="zinc finger region" description="C4-type" evidence="1">
    <location>
        <begin position="737"/>
        <end position="763"/>
    </location>
</feature>
<feature type="binding site" evidence="1">
    <location>
        <begin position="31"/>
        <end position="38"/>
    </location>
    <ligand>
        <name>ATP</name>
        <dbReference type="ChEBI" id="CHEBI:30616"/>
    </ligand>
</feature>
<feature type="binding site" evidence="1">
    <location>
        <begin position="638"/>
        <end position="645"/>
    </location>
    <ligand>
        <name>ATP</name>
        <dbReference type="ChEBI" id="CHEBI:30616"/>
    </ligand>
</feature>
<reference key="1">
    <citation type="journal article" date="2003" name="Nature">
        <title>Unique physiological and pathogenic features of Leptospira interrogans revealed by whole-genome sequencing.</title>
        <authorList>
            <person name="Ren S.-X."/>
            <person name="Fu G."/>
            <person name="Jiang X.-G."/>
            <person name="Zeng R."/>
            <person name="Miao Y.-G."/>
            <person name="Xu H."/>
            <person name="Zhang Y.-X."/>
            <person name="Xiong H."/>
            <person name="Lu G."/>
            <person name="Lu L.-F."/>
            <person name="Jiang H.-Q."/>
            <person name="Jia J."/>
            <person name="Tu Y.-F."/>
            <person name="Jiang J.-X."/>
            <person name="Gu W.-Y."/>
            <person name="Zhang Y.-Q."/>
            <person name="Cai Z."/>
            <person name="Sheng H.-H."/>
            <person name="Yin H.-F."/>
            <person name="Zhang Y."/>
            <person name="Zhu G.-F."/>
            <person name="Wan M."/>
            <person name="Huang H.-L."/>
            <person name="Qian Z."/>
            <person name="Wang S.-Y."/>
            <person name="Ma W."/>
            <person name="Yao Z.-J."/>
            <person name="Shen Y."/>
            <person name="Qiang B.-Q."/>
            <person name="Xia Q.-C."/>
            <person name="Guo X.-K."/>
            <person name="Danchin A."/>
            <person name="Saint Girons I."/>
            <person name="Somerville R.L."/>
            <person name="Wen Y.-M."/>
            <person name="Shi M.-H."/>
            <person name="Chen Z."/>
            <person name="Xu J.-G."/>
            <person name="Zhao G.-P."/>
        </authorList>
    </citation>
    <scope>NUCLEOTIDE SEQUENCE [LARGE SCALE GENOMIC DNA]</scope>
    <source>
        <strain>56601</strain>
    </source>
</reference>
<sequence>MQEIRIRGAREHNLKNINVDIPRDQLVVITGLSGSGKSSLAFDTIYAEGQRRYVESLSAYARQFLGQMEKPDLDLIEGLSPAISIEQKTTHRNPRSTVGTVTEIYDYLRLLYARVGKPHCPECGTPIQSMSIDQITARVLAFPQGSKLQILAPVISGKKGEHKDVLEKIRKDGFNRVRINGEIRTLEEEIVLKKNFKTSIEIVVDRIVMKEGIRSRLADSVETALKQSEGLVILDDGSKDHILSQKMACPNGHDIGFTELSPRMFSFNSPYGACETCDGLGSLLEFDEDLLVNDPELSLVDGCIEAWAGSKSNGFWFMATLKSLSDSLKFKMNTPWKDLPEKTRQTILYGDKKIKIEYDFRGANSHYEFTKEYEGVIPNLQRRYKETKSDSMRQWFESYMTNHPCPSCKGKRLKRESLSVKVHNVPVDEFTSYSIEKALNFVQNLKVTGAEEIIAKPILKEIHQRLSFLNDVGVGYLTLERSAGSLSGGEAQRIRLATQIGSRLMGVLYILDEPSIGLHQRDNTKLVSTLKNLRDLGNTVLVVEHDQETMEESDWLIDMGPGAGVHGGSIVCAGTPAEVSKHKNSLTGKYLSGRLKVPIPAKLREGNGSKLQIIGAKENNLKNIDVNIPLGKLVVITGVSGSGKSTLINDILYNAAAHKVMKMKTLAGKHKTIKGFENIDKIINIDQSPIGRTPRSNPATYTGLFTPIREMFAGLEEAKLRGYGPGRFSFNVSGGRCETCEGDGILKIEMHFLPDVYVTCEVCKGKRYNQETLEVRYKGKNIFDVLEMTVEDANQFFENIPIVKRKLETLLEVGLGYIRLGQPATTFSGGEAQRIKLATELSKRPTGKTLYILDEPTTGLHFEDVRRLSEVLHTLVDRGNSMIVIEHNLDVIKQADWIVDMGPEGGDGGGLVIAEGIPKDIAKIKNSYTGQYLKKIFTSSEKISRKTK</sequence>
<comment type="function">
    <text evidence="1">The UvrABC repair system catalyzes the recognition and processing of DNA lesions. UvrA is an ATPase and a DNA-binding protein. A damage recognition complex composed of 2 UvrA and 2 UvrB subunits scans DNA for abnormalities. When the presence of a lesion has been verified by UvrB, the UvrA molecules dissociate.</text>
</comment>
<comment type="subunit">
    <text evidence="1">Forms a heterotetramer with UvrB during the search for lesions.</text>
</comment>
<comment type="subcellular location">
    <subcellularLocation>
        <location evidence="1">Cytoplasm</location>
    </subcellularLocation>
</comment>
<comment type="similarity">
    <text evidence="1">Belongs to the ABC transporter superfamily. UvrA family.</text>
</comment>